<geneLocation type="chloroplast"/>
<keyword id="KW-0150">Chloroplast</keyword>
<keyword id="KW-0934">Plastid</keyword>
<keyword id="KW-1185">Reference proteome</keyword>
<keyword id="KW-0687">Ribonucleoprotein</keyword>
<keyword id="KW-0689">Ribosomal protein</keyword>
<keyword id="KW-0694">RNA-binding</keyword>
<keyword id="KW-0699">rRNA-binding</keyword>
<reference key="1">
    <citation type="journal article" date="2003" name="DNA Res.">
        <title>Complete sequence and analysis of the plastid genome of the unicellular red alga Cyanidioschyzon merolae.</title>
        <authorList>
            <person name="Ohta N."/>
            <person name="Matsuzaki M."/>
            <person name="Misumi O."/>
            <person name="Miyagishima S.-Y."/>
            <person name="Nozaki H."/>
            <person name="Tanaka K."/>
            <person name="Shin-i T."/>
            <person name="Kohara Y."/>
            <person name="Kuroiwa T."/>
        </authorList>
    </citation>
    <scope>NUCLEOTIDE SEQUENCE [LARGE SCALE GENOMIC DNA]</scope>
    <source>
        <strain>NIES-3377 / 10D</strain>
    </source>
</reference>
<name>RK21_CYAM1</name>
<dbReference type="EMBL" id="AB002583">
    <property type="protein sequence ID" value="BAC76119.1"/>
    <property type="molecule type" value="Genomic_DNA"/>
</dbReference>
<dbReference type="RefSeq" id="NP_848957.1">
    <property type="nucleotide sequence ID" value="NC_004799.1"/>
</dbReference>
<dbReference type="SMR" id="Q85G72"/>
<dbReference type="STRING" id="280699.Q85G72"/>
<dbReference type="EnsemblPlants" id="CMV034CT">
    <property type="protein sequence ID" value="CMV034CT"/>
    <property type="gene ID" value="CMV034C"/>
</dbReference>
<dbReference type="GeneID" id="844977"/>
<dbReference type="Gramene" id="CMV034CT">
    <property type="protein sequence ID" value="CMV034CT"/>
    <property type="gene ID" value="CMV034C"/>
</dbReference>
<dbReference type="KEGG" id="cme:CymeCp025"/>
<dbReference type="eggNOG" id="ENOG502S7IP">
    <property type="taxonomic scope" value="Eukaryota"/>
</dbReference>
<dbReference type="HOGENOM" id="CLU_061463_3_2_1"/>
<dbReference type="Proteomes" id="UP000007014">
    <property type="component" value="Chloroplast"/>
</dbReference>
<dbReference type="GO" id="GO:0009507">
    <property type="term" value="C:chloroplast"/>
    <property type="evidence" value="ECO:0007669"/>
    <property type="project" value="UniProtKB-SubCell"/>
</dbReference>
<dbReference type="GO" id="GO:0005762">
    <property type="term" value="C:mitochondrial large ribosomal subunit"/>
    <property type="evidence" value="ECO:0007669"/>
    <property type="project" value="TreeGrafter"/>
</dbReference>
<dbReference type="GO" id="GO:0019843">
    <property type="term" value="F:rRNA binding"/>
    <property type="evidence" value="ECO:0007669"/>
    <property type="project" value="UniProtKB-UniRule"/>
</dbReference>
<dbReference type="GO" id="GO:0003735">
    <property type="term" value="F:structural constituent of ribosome"/>
    <property type="evidence" value="ECO:0007669"/>
    <property type="project" value="InterPro"/>
</dbReference>
<dbReference type="GO" id="GO:0006412">
    <property type="term" value="P:translation"/>
    <property type="evidence" value="ECO:0007669"/>
    <property type="project" value="UniProtKB-UniRule"/>
</dbReference>
<dbReference type="HAMAP" id="MF_01363">
    <property type="entry name" value="Ribosomal_bL21"/>
    <property type="match status" value="1"/>
</dbReference>
<dbReference type="InterPro" id="IPR028909">
    <property type="entry name" value="bL21-like"/>
</dbReference>
<dbReference type="InterPro" id="IPR036164">
    <property type="entry name" value="bL21-like_sf"/>
</dbReference>
<dbReference type="InterPro" id="IPR001787">
    <property type="entry name" value="Ribosomal_bL21"/>
</dbReference>
<dbReference type="NCBIfam" id="TIGR00061">
    <property type="entry name" value="L21"/>
    <property type="match status" value="1"/>
</dbReference>
<dbReference type="PANTHER" id="PTHR21349">
    <property type="entry name" value="50S RIBOSOMAL PROTEIN L21"/>
    <property type="match status" value="1"/>
</dbReference>
<dbReference type="PANTHER" id="PTHR21349:SF7">
    <property type="entry name" value="LARGE RIBOSOMAL SUBUNIT PROTEIN BL21C"/>
    <property type="match status" value="1"/>
</dbReference>
<dbReference type="Pfam" id="PF00829">
    <property type="entry name" value="Ribosomal_L21p"/>
    <property type="match status" value="1"/>
</dbReference>
<dbReference type="SUPFAM" id="SSF141091">
    <property type="entry name" value="L21p-like"/>
    <property type="match status" value="1"/>
</dbReference>
<accession>Q85G72</accession>
<evidence type="ECO:0000255" key="1">
    <source>
        <dbReference type="HAMAP-Rule" id="MF_01363"/>
    </source>
</evidence>
<evidence type="ECO:0000305" key="2"/>
<comment type="function">
    <text evidence="1">This protein binds to 23S rRNA.</text>
</comment>
<comment type="subunit">
    <text evidence="1">Part of the 50S ribosomal subunit.</text>
</comment>
<comment type="subcellular location">
    <subcellularLocation>
        <location>Plastid</location>
        <location>Chloroplast</location>
    </subcellularLocation>
</comment>
<comment type="similarity">
    <text evidence="1">Belongs to the bacterial ribosomal protein bL21 family.</text>
</comment>
<gene>
    <name evidence="1" type="primary">rpl21</name>
</gene>
<sequence length="107" mass="12707">MSPTAYAIVETCGKQYWFQPGRYYDINFINAEPGDKIIFHRVLWLQHQQLLIGRPFLPNTHVEATILQHLKSKKVLVYHMRSKKKTRKKYGARQLLTRIYIHPFHGS</sequence>
<proteinExistence type="inferred from homology"/>
<feature type="chain" id="PRO_0000269442" description="Large ribosomal subunit protein bL21c">
    <location>
        <begin position="1"/>
        <end position="107"/>
    </location>
</feature>
<protein>
    <recommendedName>
        <fullName evidence="1">Large ribosomal subunit protein bL21c</fullName>
    </recommendedName>
    <alternativeName>
        <fullName evidence="2">50S ribosomal protein L21, chloroplastic</fullName>
    </alternativeName>
</protein>
<organism>
    <name type="scientific">Cyanidioschyzon merolae (strain NIES-3377 / 10D)</name>
    <name type="common">Unicellular red alga</name>
    <dbReference type="NCBI Taxonomy" id="280699"/>
    <lineage>
        <taxon>Eukaryota</taxon>
        <taxon>Rhodophyta</taxon>
        <taxon>Bangiophyceae</taxon>
        <taxon>Cyanidiales</taxon>
        <taxon>Cyanidiaceae</taxon>
        <taxon>Cyanidioschyzon</taxon>
    </lineage>
</organism>